<keyword id="KW-0007">Acetylation</keyword>
<keyword id="KW-0067">ATP-binding</keyword>
<keyword id="KW-0143">Chaperone</keyword>
<keyword id="KW-0963">Cytoplasm</keyword>
<keyword id="KW-0206">Cytoskeleton</keyword>
<keyword id="KW-0488">Methylation</keyword>
<keyword id="KW-0547">Nucleotide-binding</keyword>
<keyword id="KW-0539">Nucleus</keyword>
<keyword id="KW-0597">Phosphoprotein</keyword>
<keyword id="KW-1185">Reference proteome</keyword>
<keyword id="KW-0346">Stress response</keyword>
<comment type="function">
    <text evidence="2">Molecular chaperone implicated in a wide variety of cellular processes, including protection of the proteome from stress, folding and transport of newly synthesized polypeptides, activation of proteolysis of misfolded proteins and the formation and dissociation of protein complexes. Plays a pivotal role in the protein quality control system, ensuring the correct folding of proteins, the re-folding of misfolded proteins and controlling the targeting of proteins for subsequent degradation. This is achieved through cycles of ATP binding, ATP hydrolysis and ADP release, mediated by co-chaperones. The co-chaperones have been shown to not only regulate different steps of the ATPase cycle, but they also have an individual specificity such that one co-chaperone may promote folding of a substrate while another may promote degradation. The affinity for polypeptides is regulated by its nucleotide bound state. In the ATP-bound form, it has a low affinity for substrate proteins. However, upon hydrolysis of the ATP to ADP, it undergoes a conformational change that increases its affinity for substrate proteins. It goes through repeated cycles of ATP hydrolysis and nucleotide exchange, which permits cycles of substrate binding and release. The co-chaperones are of three types: J-domain co-chaperones such as HSP40s (stimulate ATPase hydrolysis by HSP70), the nucleotide exchange factors (NEF) such as BAG1/2/3 (facilitate conversion of HSP70 from the ADP-bound to the ATP-bound state thereby promoting substrate release), and the TPR domain chaperones such as HOPX and STUB1. Maintains protein homeostasis during cellular stress through two opposing mechanisms: protein refolding and degradation. Its acetylation/deacetylation state determines whether it functions in protein refolding or protein degradation by controlling the competitive binding of co-chaperones HOPX and STUB1. During the early stress response, the acetylated form binds to HOPX which assists in chaperone-mediated protein refolding, thereafter, it is deacetylated and binds to ubiquitin ligase STUB1 that promotes ubiquitin-mediated protein degradation. Regulates centrosome integrity during mitosis, and is required for the maintenance of a functional mitotic centrosome that supports the assembly of a bipolar mitotic spindle. Enhances STUB1-mediated SMAD3 ubiquitination and degradation and facilitates STUB1-mediated inhibition of TGF-beta signaling. Essential for STUB1-mediated ubiquitination and degradation of FOXP3 in regulatory T-cells (Treg) during inflammation.</text>
</comment>
<comment type="subunit">
    <text evidence="2">Component of the CatSper complex. Identified in a IGF2BP1-dependent mRNP granule complex containing untranslated mRNAs. Interacts with CHCHD3, DNAJC7, IRAK1BP1, PPP5C and TSC2. Interacts with TERT; the interaction occurs in the absence of the RNA component, TERC, and dissociates once the TERT complex has formed. Interacts with TRIM5 (via B30.2/SPRY domain). Interacts with PRKN. Interacts with FOXP3. Interacts with DNAJC9 (via J domain). Interacts with NAA10, HSP40, HSP90 and HDAC4. The acetylated form and the non-acetylated form interact with HOPX and STUB1 respectively. Interacts with NEDD1 and SMAD3. Interacts (via NBD) with BAG1, BAG2, BAG3 and HSPH1/HSP105. Interacts with DNAJC8.</text>
</comment>
<comment type="subcellular location">
    <subcellularLocation>
        <location evidence="2">Cytoplasm</location>
    </subcellularLocation>
    <subcellularLocation>
        <location evidence="2">Nucleus</location>
    </subcellularLocation>
    <subcellularLocation>
        <location evidence="2">Cytoplasm</location>
        <location evidence="2">Cytoskeleton</location>
        <location evidence="2">Microtubule organizing center</location>
        <location evidence="2">Centrosome</location>
    </subcellularLocation>
    <text evidence="2">Localized in cytoplasmic mRNP granules containing untranslated mRNAs.</text>
</comment>
<comment type="domain">
    <text evidence="2">The N-terminal nucleotide binding domain (NBD) (also known as the ATPase domain) is responsible for binding and hydrolyzing ATP. The C-terminal substrate-binding domain (SBD) (also known as peptide-binding domain) binds to the client/substrate proteins. The two domains are allosterically coupled so that, when ATP is bound to the NBD, the SBD binds relatively weakly to clients. When ADP is bound in the NBD, a conformational change enhances the affinity of the SBD for client proteins.</text>
</comment>
<comment type="PTM">
    <text evidence="2">In response to cellular stress, acetylated at Lys-77 by NA110 and then gradually deacetylated by HDAC4 at later stages. Acetylation enhances its chaperone activity and also determines whether it will function as a chaperone for protein refolding or degradation by controlling its binding to co-chaperones HOPX and STUB1. The acetylated form and the non-acetylated form bind to HOPX and STUB1 respectively. Acetylation also protects cells against various types of cellular stress.</text>
</comment>
<comment type="similarity">
    <text evidence="5">Belongs to the heat shock protein 70 family.</text>
</comment>
<accession>Q7YQC6</accession>
<accession>Q8WNS9</accession>
<evidence type="ECO:0000250" key="1"/>
<evidence type="ECO:0000250" key="2">
    <source>
        <dbReference type="UniProtKB" id="P0DMV8"/>
    </source>
</evidence>
<evidence type="ECO:0000250" key="3">
    <source>
        <dbReference type="UniProtKB" id="P11142"/>
    </source>
</evidence>
<evidence type="ECO:0000256" key="4">
    <source>
        <dbReference type="SAM" id="MobiDB-lite"/>
    </source>
</evidence>
<evidence type="ECO:0000305" key="5"/>
<organism>
    <name type="scientific">Canis lupus familiaris</name>
    <name type="common">Dog</name>
    <name type="synonym">Canis familiaris</name>
    <dbReference type="NCBI Taxonomy" id="9615"/>
    <lineage>
        <taxon>Eukaryota</taxon>
        <taxon>Metazoa</taxon>
        <taxon>Chordata</taxon>
        <taxon>Craniata</taxon>
        <taxon>Vertebrata</taxon>
        <taxon>Euteleostomi</taxon>
        <taxon>Mammalia</taxon>
        <taxon>Eutheria</taxon>
        <taxon>Laurasiatheria</taxon>
        <taxon>Carnivora</taxon>
        <taxon>Caniformia</taxon>
        <taxon>Canidae</taxon>
        <taxon>Canis</taxon>
    </lineage>
</organism>
<name>HSP71_CANLF</name>
<proteinExistence type="evidence at transcript level"/>
<feature type="initiator methionine" description="Removed" evidence="2">
    <location>
        <position position="1"/>
    </location>
</feature>
<feature type="chain" id="PRO_0000078247" description="Heat shock 70 kDa protein 1">
    <location>
        <begin position="2"/>
        <end position="641"/>
    </location>
</feature>
<feature type="region of interest" description="Nucleotide-binding domain (NBD)" evidence="3">
    <location>
        <begin position="2"/>
        <end position="386"/>
    </location>
</feature>
<feature type="region of interest" description="Substrate-binding domain (SBD)" evidence="3">
    <location>
        <begin position="394"/>
        <end position="509"/>
    </location>
</feature>
<feature type="region of interest" description="Disordered" evidence="4">
    <location>
        <begin position="617"/>
        <end position="641"/>
    </location>
</feature>
<feature type="compositionally biased region" description="Gly residues" evidence="4">
    <location>
        <begin position="617"/>
        <end position="633"/>
    </location>
</feature>
<feature type="binding site" evidence="1">
    <location>
        <begin position="12"/>
        <end position="15"/>
    </location>
    <ligand>
        <name>ATP</name>
        <dbReference type="ChEBI" id="CHEBI:30616"/>
    </ligand>
</feature>
<feature type="binding site" evidence="1">
    <location>
        <position position="71"/>
    </location>
    <ligand>
        <name>ATP</name>
        <dbReference type="ChEBI" id="CHEBI:30616"/>
    </ligand>
</feature>
<feature type="binding site" evidence="1">
    <location>
        <begin position="202"/>
        <end position="204"/>
    </location>
    <ligand>
        <name>ATP</name>
        <dbReference type="ChEBI" id="CHEBI:30616"/>
    </ligand>
</feature>
<feature type="binding site" evidence="1">
    <location>
        <begin position="268"/>
        <end position="275"/>
    </location>
    <ligand>
        <name>ATP</name>
        <dbReference type="ChEBI" id="CHEBI:30616"/>
    </ligand>
</feature>
<feature type="binding site" evidence="1">
    <location>
        <begin position="339"/>
        <end position="342"/>
    </location>
    <ligand>
        <name>ATP</name>
        <dbReference type="ChEBI" id="CHEBI:30616"/>
    </ligand>
</feature>
<feature type="modified residue" description="N-acetylalanine" evidence="2">
    <location>
        <position position="2"/>
    </location>
</feature>
<feature type="modified residue" description="N6-acetyllysine" evidence="2">
    <location>
        <position position="77"/>
    </location>
</feature>
<feature type="modified residue" description="N6-acetyllysine" evidence="2">
    <location>
        <position position="108"/>
    </location>
</feature>
<feature type="modified residue" description="N6-acetyllysine" evidence="2">
    <location>
        <position position="246"/>
    </location>
</feature>
<feature type="modified residue" description="N6-acetyllysine" evidence="2">
    <location>
        <position position="348"/>
    </location>
</feature>
<feature type="modified residue" description="Omega-N-methylarginine" evidence="2">
    <location>
        <position position="469"/>
    </location>
</feature>
<feature type="modified residue" description="N6,N6,N6-trimethyllysine; by METTL21A; alternate" evidence="2">
    <location>
        <position position="561"/>
    </location>
</feature>
<feature type="modified residue" description="N6,N6-dimethyllysine; alternate" evidence="2">
    <location>
        <position position="561"/>
    </location>
</feature>
<feature type="modified residue" description="Phosphoserine" evidence="2">
    <location>
        <position position="631"/>
    </location>
</feature>
<feature type="modified residue" description="Phosphoserine" evidence="2">
    <location>
        <position position="633"/>
    </location>
</feature>
<feature type="modified residue" description="Phosphothreonine" evidence="2">
    <location>
        <position position="636"/>
    </location>
</feature>
<feature type="sequence conflict" description="In Ref. 1; BAB78505." evidence="5" ref="1">
    <original>IK</original>
    <variation>S</variation>
    <location>
        <begin position="414"/>
        <end position="415"/>
    </location>
</feature>
<feature type="sequence conflict" description="In Ref. 1; BAB78505." evidence="5" ref="1">
    <original>AN</original>
    <variation>GF</variation>
    <location>
        <begin position="583"/>
        <end position="584"/>
    </location>
</feature>
<protein>
    <recommendedName>
        <fullName>Heat shock 70 kDa protein 1</fullName>
    </recommendedName>
</protein>
<reference key="1">
    <citation type="submission" date="2001-11" db="EMBL/GenBank/DDBJ databases">
        <title>Canine heat shock protein 70 (hsp70) mRNA, complete cds.</title>
        <authorList>
            <person name="Abe K."/>
            <person name="Kano R."/>
            <person name="Hasegawa A."/>
        </authorList>
    </citation>
    <scope>NUCLEOTIDE SEQUENCE [MRNA]</scope>
    <source>
        <strain>Cocker spaniel</strain>
        <tissue>Kidney</tissue>
    </source>
</reference>
<reference key="2">
    <citation type="submission" date="2003-07" db="EMBL/GenBank/DDBJ databases">
        <title>Canine heat shock protein 70 in blood cells.</title>
        <authorList>
            <person name="Yamasaki M."/>
            <person name="Tajima M."/>
            <person name="Yamato O."/>
            <person name="Jeong J."/>
            <person name="Maede Y."/>
        </authorList>
    </citation>
    <scope>NUCLEOTIDE SEQUENCE [MRNA]</scope>
</reference>
<dbReference type="EMBL" id="AB075027">
    <property type="protein sequence ID" value="BAB78505.1"/>
    <property type="molecule type" value="mRNA"/>
</dbReference>
<dbReference type="EMBL" id="AB114672">
    <property type="protein sequence ID" value="BAC79353.1"/>
    <property type="molecule type" value="mRNA"/>
</dbReference>
<dbReference type="EMBL" id="AB114673">
    <property type="protein sequence ID" value="BAC79354.1"/>
    <property type="molecule type" value="mRNA"/>
</dbReference>
<dbReference type="EMBL" id="AB114674">
    <property type="protein sequence ID" value="BAC79355.1"/>
    <property type="molecule type" value="mRNA"/>
</dbReference>
<dbReference type="EMBL" id="AB114675">
    <property type="protein sequence ID" value="BAC79356.1"/>
    <property type="molecule type" value="mRNA"/>
</dbReference>
<dbReference type="RefSeq" id="NP_001003067.2">
    <property type="nucleotide sequence ID" value="NM_001003067.2"/>
</dbReference>
<dbReference type="SMR" id="Q7YQC6"/>
<dbReference type="DIP" id="DIP-44612N"/>
<dbReference type="FunCoup" id="Q7YQC6">
    <property type="interactions" value="1179"/>
</dbReference>
<dbReference type="IntAct" id="Q7YQC6">
    <property type="interactions" value="2"/>
</dbReference>
<dbReference type="MINT" id="Q7YQC6"/>
<dbReference type="STRING" id="9615.ENSCAFP00000000903"/>
<dbReference type="PaxDb" id="9612-ENSCAFP00000000903"/>
<dbReference type="Ensembl" id="ENSCAFT00845023040.1">
    <property type="protein sequence ID" value="ENSCAFP00845018064.1"/>
    <property type="gene ID" value="ENSCAFG00845012950.1"/>
</dbReference>
<dbReference type="GeneID" id="403612"/>
<dbReference type="KEGG" id="cfa:403612"/>
<dbReference type="CTD" id="403612"/>
<dbReference type="VEuPathDB" id="HostDB:ENSCAFG00845012950"/>
<dbReference type="eggNOG" id="KOG0101">
    <property type="taxonomic scope" value="Eukaryota"/>
</dbReference>
<dbReference type="GeneTree" id="ENSGT00940000161215"/>
<dbReference type="InParanoid" id="Q7YQC6"/>
<dbReference type="OrthoDB" id="14476at33554"/>
<dbReference type="Reactome" id="R-CFA-3371453">
    <property type="pathway name" value="Regulation of HSF1-mediated heat shock response"/>
</dbReference>
<dbReference type="Reactome" id="R-CFA-3371497">
    <property type="pathway name" value="HSP90 chaperone cycle for steroid hormone receptors (SHR) in the presence of ligand"/>
</dbReference>
<dbReference type="Reactome" id="R-CFA-3371568">
    <property type="pathway name" value="Attenuation phase"/>
</dbReference>
<dbReference type="Reactome" id="R-CFA-3371571">
    <property type="pathway name" value="HSF1-dependent transactivation"/>
</dbReference>
<dbReference type="Reactome" id="R-CFA-450408">
    <property type="pathway name" value="AUF1 (hnRNP D0) binds and destabilizes mRNA"/>
</dbReference>
<dbReference type="Reactome" id="R-CFA-6798695">
    <property type="pathway name" value="Neutrophil degranulation"/>
</dbReference>
<dbReference type="Reactome" id="R-CFA-9833482">
    <property type="pathway name" value="PKR-mediated signaling"/>
</dbReference>
<dbReference type="Reactome" id="R-CFA-9841251">
    <property type="pathway name" value="Mitochondrial unfolded protein response (UPRmt)"/>
</dbReference>
<dbReference type="PRO" id="PR:Q7YQC6"/>
<dbReference type="Proteomes" id="UP000002254">
    <property type="component" value="Unplaced"/>
</dbReference>
<dbReference type="Proteomes" id="UP000694429">
    <property type="component" value="Unplaced"/>
</dbReference>
<dbReference type="Proteomes" id="UP000694542">
    <property type="component" value="Unplaced"/>
</dbReference>
<dbReference type="Proteomes" id="UP000805418">
    <property type="component" value="Chromosome 12"/>
</dbReference>
<dbReference type="GO" id="GO:0005813">
    <property type="term" value="C:centrosome"/>
    <property type="evidence" value="ECO:0000250"/>
    <property type="project" value="UniProtKB"/>
</dbReference>
<dbReference type="GO" id="GO:0005737">
    <property type="term" value="C:cytoplasm"/>
    <property type="evidence" value="ECO:0000318"/>
    <property type="project" value="GO_Central"/>
</dbReference>
<dbReference type="GO" id="GO:0005829">
    <property type="term" value="C:cytosol"/>
    <property type="evidence" value="ECO:0000318"/>
    <property type="project" value="GO_Central"/>
</dbReference>
<dbReference type="GO" id="GO:0005634">
    <property type="term" value="C:nucleus"/>
    <property type="evidence" value="ECO:0000318"/>
    <property type="project" value="GO_Central"/>
</dbReference>
<dbReference type="GO" id="GO:0005886">
    <property type="term" value="C:plasma membrane"/>
    <property type="evidence" value="ECO:0000318"/>
    <property type="project" value="GO_Central"/>
</dbReference>
<dbReference type="GO" id="GO:1990904">
    <property type="term" value="C:ribonucleoprotein complex"/>
    <property type="evidence" value="ECO:0000250"/>
    <property type="project" value="UniProtKB"/>
</dbReference>
<dbReference type="GO" id="GO:0005524">
    <property type="term" value="F:ATP binding"/>
    <property type="evidence" value="ECO:0007669"/>
    <property type="project" value="UniProtKB-KW"/>
</dbReference>
<dbReference type="GO" id="GO:0016887">
    <property type="term" value="F:ATP hydrolysis activity"/>
    <property type="evidence" value="ECO:0000318"/>
    <property type="project" value="GO_Central"/>
</dbReference>
<dbReference type="GO" id="GO:0140662">
    <property type="term" value="F:ATP-dependent protein folding chaperone"/>
    <property type="evidence" value="ECO:0007669"/>
    <property type="project" value="InterPro"/>
</dbReference>
<dbReference type="GO" id="GO:0031072">
    <property type="term" value="F:heat shock protein binding"/>
    <property type="evidence" value="ECO:0000318"/>
    <property type="project" value="GO_Central"/>
</dbReference>
<dbReference type="GO" id="GO:0044183">
    <property type="term" value="F:protein folding chaperone"/>
    <property type="evidence" value="ECO:0000318"/>
    <property type="project" value="GO_Central"/>
</dbReference>
<dbReference type="GO" id="GO:0051085">
    <property type="term" value="P:chaperone cofactor-dependent protein refolding"/>
    <property type="evidence" value="ECO:0000318"/>
    <property type="project" value="GO_Central"/>
</dbReference>
<dbReference type="GO" id="GO:0090063">
    <property type="term" value="P:positive regulation of microtubule nucleation"/>
    <property type="evidence" value="ECO:0000250"/>
    <property type="project" value="UniProtKB"/>
</dbReference>
<dbReference type="GO" id="GO:0032436">
    <property type="term" value="P:positive regulation of proteasomal ubiquitin-dependent protein catabolic process"/>
    <property type="evidence" value="ECO:0000318"/>
    <property type="project" value="GO_Central"/>
</dbReference>
<dbReference type="GO" id="GO:0042026">
    <property type="term" value="P:protein refolding"/>
    <property type="evidence" value="ECO:0000250"/>
    <property type="project" value="UniProtKB"/>
</dbReference>
<dbReference type="GO" id="GO:1901673">
    <property type="term" value="P:regulation of mitotic spindle assembly"/>
    <property type="evidence" value="ECO:0000250"/>
    <property type="project" value="UniProtKB"/>
</dbReference>
<dbReference type="CDD" id="cd10233">
    <property type="entry name" value="ASKHA_NBD_HSP70_HSPA1"/>
    <property type="match status" value="1"/>
</dbReference>
<dbReference type="FunFam" id="2.60.34.10:FF:000002">
    <property type="entry name" value="Heat shock 70 kDa"/>
    <property type="match status" value="1"/>
</dbReference>
<dbReference type="FunFam" id="3.30.420.40:FF:000172">
    <property type="entry name" value="Heat shock 70 kDa protein"/>
    <property type="match status" value="1"/>
</dbReference>
<dbReference type="FunFam" id="3.30.30.30:FF:000001">
    <property type="entry name" value="heat shock 70 kDa protein-like"/>
    <property type="match status" value="1"/>
</dbReference>
<dbReference type="FunFam" id="3.30.420.40:FF:000028">
    <property type="entry name" value="heat shock 70 kDa protein-like"/>
    <property type="match status" value="1"/>
</dbReference>
<dbReference type="FunFam" id="3.30.420.40:FF:000135">
    <property type="entry name" value="Heat shock cognate 71 kDa protein"/>
    <property type="match status" value="1"/>
</dbReference>
<dbReference type="FunFam" id="3.90.640.10:FF:000134">
    <property type="entry name" value="Heat shock cognate 71 kDa protein"/>
    <property type="match status" value="1"/>
</dbReference>
<dbReference type="FunFam" id="1.20.1270.10:FF:000003">
    <property type="entry name" value="heat shock cognate 71 kDa protein-like"/>
    <property type="match status" value="1"/>
</dbReference>
<dbReference type="FunFam" id="3.30.420.40:FF:000026">
    <property type="entry name" value="Heat shock protein 70"/>
    <property type="match status" value="1"/>
</dbReference>
<dbReference type="Gene3D" id="1.20.1270.10">
    <property type="match status" value="1"/>
</dbReference>
<dbReference type="Gene3D" id="3.30.30.30">
    <property type="match status" value="1"/>
</dbReference>
<dbReference type="Gene3D" id="3.30.420.40">
    <property type="match status" value="2"/>
</dbReference>
<dbReference type="Gene3D" id="3.90.640.10">
    <property type="entry name" value="Actin, Chain A, domain 4"/>
    <property type="match status" value="1"/>
</dbReference>
<dbReference type="Gene3D" id="2.60.34.10">
    <property type="entry name" value="Substrate Binding Domain Of DNAk, Chain A, domain 1"/>
    <property type="match status" value="1"/>
</dbReference>
<dbReference type="InterPro" id="IPR043129">
    <property type="entry name" value="ATPase_NBD"/>
</dbReference>
<dbReference type="InterPro" id="IPR018181">
    <property type="entry name" value="Heat_shock_70_CS"/>
</dbReference>
<dbReference type="InterPro" id="IPR029048">
    <property type="entry name" value="HSP70_C_sf"/>
</dbReference>
<dbReference type="InterPro" id="IPR029047">
    <property type="entry name" value="HSP70_peptide-bd_sf"/>
</dbReference>
<dbReference type="InterPro" id="IPR013126">
    <property type="entry name" value="Hsp_70_fam"/>
</dbReference>
<dbReference type="NCBIfam" id="NF001413">
    <property type="entry name" value="PRK00290.1"/>
    <property type="match status" value="1"/>
</dbReference>
<dbReference type="PANTHER" id="PTHR19375">
    <property type="entry name" value="HEAT SHOCK PROTEIN 70KDA"/>
    <property type="match status" value="1"/>
</dbReference>
<dbReference type="Pfam" id="PF00012">
    <property type="entry name" value="HSP70"/>
    <property type="match status" value="1"/>
</dbReference>
<dbReference type="PRINTS" id="PR00301">
    <property type="entry name" value="HEATSHOCK70"/>
</dbReference>
<dbReference type="SUPFAM" id="SSF53067">
    <property type="entry name" value="Actin-like ATPase domain"/>
    <property type="match status" value="2"/>
</dbReference>
<dbReference type="SUPFAM" id="SSF100934">
    <property type="entry name" value="Heat shock protein 70kD (HSP70), C-terminal subdomain"/>
    <property type="match status" value="1"/>
</dbReference>
<dbReference type="SUPFAM" id="SSF100920">
    <property type="entry name" value="Heat shock protein 70kD (HSP70), peptide-binding domain"/>
    <property type="match status" value="1"/>
</dbReference>
<dbReference type="PROSITE" id="PS00297">
    <property type="entry name" value="HSP70_1"/>
    <property type="match status" value="1"/>
</dbReference>
<dbReference type="PROSITE" id="PS00329">
    <property type="entry name" value="HSP70_2"/>
    <property type="match status" value="1"/>
</dbReference>
<dbReference type="PROSITE" id="PS01036">
    <property type="entry name" value="HSP70_3"/>
    <property type="match status" value="1"/>
</dbReference>
<sequence>MAKSAAIGIDLGTTYSCVGVFQHGKVEIIANDQGNRTTPSYVAFTDTERLIGDAAKNQVALNPQNTVFDAKRLIGRKFGDPVVQSDMKHWPFQVVNDGDKPKVQVSYKGETKAFYPEEISSMVLTKMKEIAEAYLGYPVTNAVITVPAYFNDSQRQATKDAGVIAGLNVLRIINEPTAAAIAYGLDRTGKGERNVLIFDLGGGTFDVSILTIDDGIFEVKATAGDTHLGGEDFDNRLVNHFVEEFKRKHKKDISQNKRAVRRLRTACERAKRTLSSSTQASLEIDSLFEGIDFYTSITRARFEELCSDLFRSTLEPVEKALRDAKLDKAQIHDLVLVGGSTRIPKVQKLLQDFFNGRDLNKSINPDEAVAYGAAVQAAILMGDKSENVQDLLLLDVAPLSLGLETAGGVMTALIKRNSTIPTKQTQIFTTYSDNQPGVLIQVYEGERAMTRDNNLLGRFELSGIPPAPRGVPQIEVTFDIDANGILNVTATDKSTGKANKITITNDKGRLSKEEIERMVQEAEKYKAEDEVQRDRVSAKNALESYAFNMKSAVEDEGLKGKISEADKKKVLDKCQEVISWLDANTLAEKDEFEHKRKELEQVCNPIITGLYQGAGGPGAGGFGAQAPKGGSGSGPTIEEVD</sequence>
<gene>
    <name type="primary">HSPA1</name>
    <name type="synonym">Hsp70</name>
</gene>